<sequence>MDNEKGLLIVLSGPSGVGKGTVRKKIFDDPSTSYKYSISMTTRDKRQGEVDGVDYFFKAKSEFEELIKQDQFIEYAEYVGNYYGTPVQYVKDTMDRGYDVFLEIEVEGAKQVRKKFPDALFIFLAPPSLDHLRERLVGRGTESSEKIQSRVHEARKEVEMMNLYDYVVVNDEVELAKQRIQSIVEAEHLKRERIEAKYRKMILEAKK</sequence>
<feature type="chain" id="PRO_0000266411" description="Guanylate kinase">
    <location>
        <begin position="1"/>
        <end position="207"/>
    </location>
</feature>
<feature type="domain" description="Guanylate kinase-like" evidence="1">
    <location>
        <begin position="6"/>
        <end position="185"/>
    </location>
</feature>
<feature type="binding site" evidence="1">
    <location>
        <begin position="13"/>
        <end position="20"/>
    </location>
    <ligand>
        <name>ATP</name>
        <dbReference type="ChEBI" id="CHEBI:30616"/>
    </ligand>
</feature>
<accession>Q49WZ1</accession>
<gene>
    <name evidence="1" type="primary">gmk</name>
    <name type="ordered locus">SSP1562</name>
</gene>
<proteinExistence type="inferred from homology"/>
<comment type="function">
    <text evidence="1">Essential for recycling GMP and indirectly, cGMP.</text>
</comment>
<comment type="catalytic activity">
    <reaction evidence="1">
        <text>GMP + ATP = GDP + ADP</text>
        <dbReference type="Rhea" id="RHEA:20780"/>
        <dbReference type="ChEBI" id="CHEBI:30616"/>
        <dbReference type="ChEBI" id="CHEBI:58115"/>
        <dbReference type="ChEBI" id="CHEBI:58189"/>
        <dbReference type="ChEBI" id="CHEBI:456216"/>
        <dbReference type="EC" id="2.7.4.8"/>
    </reaction>
</comment>
<comment type="subcellular location">
    <subcellularLocation>
        <location evidence="1">Cytoplasm</location>
    </subcellularLocation>
</comment>
<comment type="similarity">
    <text evidence="1">Belongs to the guanylate kinase family.</text>
</comment>
<dbReference type="EC" id="2.7.4.8" evidence="1"/>
<dbReference type="EMBL" id="AP008934">
    <property type="protein sequence ID" value="BAE18707.1"/>
    <property type="molecule type" value="Genomic_DNA"/>
</dbReference>
<dbReference type="RefSeq" id="WP_011303304.1">
    <property type="nucleotide sequence ID" value="NC_007350.1"/>
</dbReference>
<dbReference type="SMR" id="Q49WZ1"/>
<dbReference type="GeneID" id="3615306"/>
<dbReference type="KEGG" id="ssp:SSP1562"/>
<dbReference type="PATRIC" id="fig|342451.11.peg.1564"/>
<dbReference type="eggNOG" id="COG0194">
    <property type="taxonomic scope" value="Bacteria"/>
</dbReference>
<dbReference type="HOGENOM" id="CLU_001715_1_2_9"/>
<dbReference type="OrthoDB" id="9808150at2"/>
<dbReference type="Proteomes" id="UP000006371">
    <property type="component" value="Chromosome"/>
</dbReference>
<dbReference type="GO" id="GO:0005829">
    <property type="term" value="C:cytosol"/>
    <property type="evidence" value="ECO:0007669"/>
    <property type="project" value="TreeGrafter"/>
</dbReference>
<dbReference type="GO" id="GO:0005524">
    <property type="term" value="F:ATP binding"/>
    <property type="evidence" value="ECO:0007669"/>
    <property type="project" value="UniProtKB-UniRule"/>
</dbReference>
<dbReference type="GO" id="GO:0004385">
    <property type="term" value="F:guanylate kinase activity"/>
    <property type="evidence" value="ECO:0007669"/>
    <property type="project" value="UniProtKB-UniRule"/>
</dbReference>
<dbReference type="CDD" id="cd00071">
    <property type="entry name" value="GMPK"/>
    <property type="match status" value="1"/>
</dbReference>
<dbReference type="FunFam" id="3.40.50.300:FF:000855">
    <property type="entry name" value="Guanylate kinase"/>
    <property type="match status" value="1"/>
</dbReference>
<dbReference type="FunFam" id="3.30.63.10:FF:000002">
    <property type="entry name" value="Guanylate kinase 1"/>
    <property type="match status" value="1"/>
</dbReference>
<dbReference type="Gene3D" id="3.30.63.10">
    <property type="entry name" value="Guanylate Kinase phosphate binding domain"/>
    <property type="match status" value="1"/>
</dbReference>
<dbReference type="Gene3D" id="3.40.50.300">
    <property type="entry name" value="P-loop containing nucleotide triphosphate hydrolases"/>
    <property type="match status" value="1"/>
</dbReference>
<dbReference type="HAMAP" id="MF_00328">
    <property type="entry name" value="Guanylate_kinase"/>
    <property type="match status" value="1"/>
</dbReference>
<dbReference type="InterPro" id="IPR008145">
    <property type="entry name" value="GK/Ca_channel_bsu"/>
</dbReference>
<dbReference type="InterPro" id="IPR008144">
    <property type="entry name" value="Guanylate_kin-like_dom"/>
</dbReference>
<dbReference type="InterPro" id="IPR017665">
    <property type="entry name" value="Guanylate_kinase"/>
</dbReference>
<dbReference type="InterPro" id="IPR020590">
    <property type="entry name" value="Guanylate_kinase_CS"/>
</dbReference>
<dbReference type="InterPro" id="IPR027417">
    <property type="entry name" value="P-loop_NTPase"/>
</dbReference>
<dbReference type="NCBIfam" id="TIGR03263">
    <property type="entry name" value="guanyl_kin"/>
    <property type="match status" value="1"/>
</dbReference>
<dbReference type="PANTHER" id="PTHR23117:SF13">
    <property type="entry name" value="GUANYLATE KINASE"/>
    <property type="match status" value="1"/>
</dbReference>
<dbReference type="PANTHER" id="PTHR23117">
    <property type="entry name" value="GUANYLATE KINASE-RELATED"/>
    <property type="match status" value="1"/>
</dbReference>
<dbReference type="Pfam" id="PF00625">
    <property type="entry name" value="Guanylate_kin"/>
    <property type="match status" value="1"/>
</dbReference>
<dbReference type="SMART" id="SM00072">
    <property type="entry name" value="GuKc"/>
    <property type="match status" value="1"/>
</dbReference>
<dbReference type="SUPFAM" id="SSF52540">
    <property type="entry name" value="P-loop containing nucleoside triphosphate hydrolases"/>
    <property type="match status" value="1"/>
</dbReference>
<dbReference type="PROSITE" id="PS00856">
    <property type="entry name" value="GUANYLATE_KINASE_1"/>
    <property type="match status" value="1"/>
</dbReference>
<dbReference type="PROSITE" id="PS50052">
    <property type="entry name" value="GUANYLATE_KINASE_2"/>
    <property type="match status" value="1"/>
</dbReference>
<keyword id="KW-0067">ATP-binding</keyword>
<keyword id="KW-0963">Cytoplasm</keyword>
<keyword id="KW-0418">Kinase</keyword>
<keyword id="KW-0547">Nucleotide-binding</keyword>
<keyword id="KW-1185">Reference proteome</keyword>
<keyword id="KW-0808">Transferase</keyword>
<protein>
    <recommendedName>
        <fullName evidence="1">Guanylate kinase</fullName>
        <ecNumber evidence="1">2.7.4.8</ecNumber>
    </recommendedName>
    <alternativeName>
        <fullName evidence="1">GMP kinase</fullName>
    </alternativeName>
</protein>
<reference key="1">
    <citation type="journal article" date="2005" name="Proc. Natl. Acad. Sci. U.S.A.">
        <title>Whole genome sequence of Staphylococcus saprophyticus reveals the pathogenesis of uncomplicated urinary tract infection.</title>
        <authorList>
            <person name="Kuroda M."/>
            <person name="Yamashita A."/>
            <person name="Hirakawa H."/>
            <person name="Kumano M."/>
            <person name="Morikawa K."/>
            <person name="Higashide M."/>
            <person name="Maruyama A."/>
            <person name="Inose Y."/>
            <person name="Matoba K."/>
            <person name="Toh H."/>
            <person name="Kuhara S."/>
            <person name="Hattori M."/>
            <person name="Ohta T."/>
        </authorList>
    </citation>
    <scope>NUCLEOTIDE SEQUENCE [LARGE SCALE GENOMIC DNA]</scope>
    <source>
        <strain>ATCC 15305 / DSM 20229 / NCIMB 8711 / NCTC 7292 / S-41</strain>
    </source>
</reference>
<organism>
    <name type="scientific">Staphylococcus saprophyticus subsp. saprophyticus (strain ATCC 15305 / DSM 20229 / NCIMB 8711 / NCTC 7292 / S-41)</name>
    <dbReference type="NCBI Taxonomy" id="342451"/>
    <lineage>
        <taxon>Bacteria</taxon>
        <taxon>Bacillati</taxon>
        <taxon>Bacillota</taxon>
        <taxon>Bacilli</taxon>
        <taxon>Bacillales</taxon>
        <taxon>Staphylococcaceae</taxon>
        <taxon>Staphylococcus</taxon>
    </lineage>
</organism>
<evidence type="ECO:0000255" key="1">
    <source>
        <dbReference type="HAMAP-Rule" id="MF_00328"/>
    </source>
</evidence>
<name>KGUA_STAS1</name>